<name>RS21_BRUSI</name>
<protein>
    <recommendedName>
        <fullName evidence="1">Small ribosomal subunit protein bS21</fullName>
    </recommendedName>
    <alternativeName>
        <fullName evidence="2">30S ribosomal protein S21</fullName>
    </alternativeName>
</protein>
<feature type="chain" id="PRO_1000079399" description="Small ribosomal subunit protein bS21">
    <location>
        <begin position="1"/>
        <end position="75"/>
    </location>
</feature>
<dbReference type="EMBL" id="CP000912">
    <property type="protein sequence ID" value="ABY39912.1"/>
    <property type="molecule type" value="Genomic_DNA"/>
</dbReference>
<dbReference type="RefSeq" id="WP_002965682.1">
    <property type="nucleotide sequence ID" value="NC_010167.1"/>
</dbReference>
<dbReference type="SMR" id="A9WVX6"/>
<dbReference type="GeneID" id="97533017"/>
<dbReference type="KEGG" id="bmt:BSUIS_B0958"/>
<dbReference type="HOGENOM" id="CLU_159258_0_1_5"/>
<dbReference type="Proteomes" id="UP000008545">
    <property type="component" value="Chromosome II"/>
</dbReference>
<dbReference type="GO" id="GO:1990904">
    <property type="term" value="C:ribonucleoprotein complex"/>
    <property type="evidence" value="ECO:0007669"/>
    <property type="project" value="UniProtKB-KW"/>
</dbReference>
<dbReference type="GO" id="GO:0005840">
    <property type="term" value="C:ribosome"/>
    <property type="evidence" value="ECO:0007669"/>
    <property type="project" value="UniProtKB-KW"/>
</dbReference>
<dbReference type="GO" id="GO:0003735">
    <property type="term" value="F:structural constituent of ribosome"/>
    <property type="evidence" value="ECO:0007669"/>
    <property type="project" value="InterPro"/>
</dbReference>
<dbReference type="GO" id="GO:0006412">
    <property type="term" value="P:translation"/>
    <property type="evidence" value="ECO:0007669"/>
    <property type="project" value="UniProtKB-UniRule"/>
</dbReference>
<dbReference type="Gene3D" id="1.20.5.1150">
    <property type="entry name" value="Ribosomal protein S8"/>
    <property type="match status" value="1"/>
</dbReference>
<dbReference type="HAMAP" id="MF_00358">
    <property type="entry name" value="Ribosomal_bS21"/>
    <property type="match status" value="1"/>
</dbReference>
<dbReference type="InterPro" id="IPR001911">
    <property type="entry name" value="Ribosomal_bS21"/>
</dbReference>
<dbReference type="InterPro" id="IPR018278">
    <property type="entry name" value="Ribosomal_bS21_CS"/>
</dbReference>
<dbReference type="InterPro" id="IPR038380">
    <property type="entry name" value="Ribosomal_bS21_sf"/>
</dbReference>
<dbReference type="NCBIfam" id="TIGR00030">
    <property type="entry name" value="S21p"/>
    <property type="match status" value="1"/>
</dbReference>
<dbReference type="PANTHER" id="PTHR21109">
    <property type="entry name" value="MITOCHONDRIAL 28S RIBOSOMAL PROTEIN S21"/>
    <property type="match status" value="1"/>
</dbReference>
<dbReference type="PANTHER" id="PTHR21109:SF0">
    <property type="entry name" value="SMALL RIBOSOMAL SUBUNIT PROTEIN BS21M"/>
    <property type="match status" value="1"/>
</dbReference>
<dbReference type="Pfam" id="PF01165">
    <property type="entry name" value="Ribosomal_S21"/>
    <property type="match status" value="1"/>
</dbReference>
<dbReference type="PRINTS" id="PR00976">
    <property type="entry name" value="RIBOSOMALS21"/>
</dbReference>
<dbReference type="PROSITE" id="PS01181">
    <property type="entry name" value="RIBOSOMAL_S21"/>
    <property type="match status" value="1"/>
</dbReference>
<keyword id="KW-0687">Ribonucleoprotein</keyword>
<keyword id="KW-0689">Ribosomal protein</keyword>
<proteinExistence type="inferred from homology"/>
<comment type="similarity">
    <text evidence="1">Belongs to the bacterial ribosomal protein bS21 family.</text>
</comment>
<evidence type="ECO:0000255" key="1">
    <source>
        <dbReference type="HAMAP-Rule" id="MF_00358"/>
    </source>
</evidence>
<evidence type="ECO:0000305" key="2"/>
<reference key="1">
    <citation type="submission" date="2007-12" db="EMBL/GenBank/DDBJ databases">
        <title>Brucella suis ATCC 23445 whole genome shotgun sequencing project.</title>
        <authorList>
            <person name="Setubal J.C."/>
            <person name="Bowns C."/>
            <person name="Boyle S."/>
            <person name="Crasta O.R."/>
            <person name="Czar M.J."/>
            <person name="Dharmanolla C."/>
            <person name="Gillespie J.J."/>
            <person name="Kenyon R.W."/>
            <person name="Lu J."/>
            <person name="Mane S."/>
            <person name="Mohapatra S."/>
            <person name="Nagrani S."/>
            <person name="Purkayastha A."/>
            <person name="Rajasimha H.K."/>
            <person name="Shallom J.M."/>
            <person name="Shallom S."/>
            <person name="Shukla M."/>
            <person name="Snyder E.E."/>
            <person name="Sobral B.W."/>
            <person name="Wattam A.R."/>
            <person name="Will R."/>
            <person name="Williams K."/>
            <person name="Yoo H."/>
            <person name="Bruce D."/>
            <person name="Detter C."/>
            <person name="Munk C."/>
            <person name="Brettin T.S."/>
        </authorList>
    </citation>
    <scope>NUCLEOTIDE SEQUENCE [LARGE SCALE GENOMIC DNA]</scope>
    <source>
        <strain>ATCC 23445 / NCTC 10510</strain>
    </source>
</reference>
<sequence>MQVLVRDNNVDQALRALKKKMQREGIFREMKMRGHYEKPSEKRAREKAEAVRRARKLARKRAQREGLIGGRTGAR</sequence>
<gene>
    <name evidence="1" type="primary">rpsU</name>
    <name type="ordered locus">BSUIS_B0958</name>
</gene>
<accession>A9WVX6</accession>
<organism>
    <name type="scientific">Brucella suis (strain ATCC 23445 / NCTC 10510)</name>
    <dbReference type="NCBI Taxonomy" id="470137"/>
    <lineage>
        <taxon>Bacteria</taxon>
        <taxon>Pseudomonadati</taxon>
        <taxon>Pseudomonadota</taxon>
        <taxon>Alphaproteobacteria</taxon>
        <taxon>Hyphomicrobiales</taxon>
        <taxon>Brucellaceae</taxon>
        <taxon>Brucella/Ochrobactrum group</taxon>
        <taxon>Brucella</taxon>
    </lineage>
</organism>